<proteinExistence type="inferred from homology"/>
<protein>
    <recommendedName>
        <fullName evidence="1">Photosystem II reaction center protein K</fullName>
        <shortName evidence="1">PSII-K</shortName>
    </recommendedName>
</protein>
<comment type="function">
    <text evidence="1">One of the components of the core complex of photosystem II (PSII). PSII is a light-driven water:plastoquinone oxidoreductase that uses light energy to abstract electrons from H(2)O, generating O(2) and a proton gradient subsequently used for ATP formation. It consists of a core antenna complex that captures photons, and an electron transfer chain that converts photonic excitation into a charge separation.</text>
</comment>
<comment type="subunit">
    <text evidence="2">PSII is composed of 1 copy each of membrane proteins PsbA, PsbB, PsbC, PsbD, PsbE, PsbF, PsbH, PsbI, PsbJ, PsbK, PsbL, PsbM, PsbT, PsbX, PsbY, Psb30/Ycf12, peripheral proteins PsbO, CyanoQ (PsbQ), PsbU, PsbV and a large number of cofactors. It forms dimeric complexes.</text>
</comment>
<comment type="subcellular location">
    <subcellularLocation>
        <location evidence="1">Cellular thylakoid membrane</location>
        <topology evidence="1">Single-pass membrane protein</topology>
    </subcellularLocation>
</comment>
<comment type="similarity">
    <text evidence="1">Belongs to the PsbK family.</text>
</comment>
<accession>A8G2T2</accession>
<feature type="propeptide" id="PRO_1000060245" evidence="1">
    <location>
        <begin position="1"/>
        <end position="9"/>
    </location>
</feature>
<feature type="chain" id="PRO_1000060246" description="Photosystem II reaction center protein K" evidence="1">
    <location>
        <begin position="10"/>
        <end position="46"/>
    </location>
</feature>
<feature type="transmembrane region" description="Helical" evidence="1">
    <location>
        <begin position="25"/>
        <end position="45"/>
    </location>
</feature>
<sequence>MLILLNTFAELPEAYKAFAPTVDVLPLIPLFFFLLVFVWQAAVGFK</sequence>
<keyword id="KW-0472">Membrane</keyword>
<keyword id="KW-0602">Photosynthesis</keyword>
<keyword id="KW-0604">Photosystem II</keyword>
<keyword id="KW-0674">Reaction center</keyword>
<keyword id="KW-0793">Thylakoid</keyword>
<keyword id="KW-0812">Transmembrane</keyword>
<keyword id="KW-1133">Transmembrane helix</keyword>
<reference key="1">
    <citation type="journal article" date="2007" name="PLoS Genet.">
        <title>Patterns and implications of gene gain and loss in the evolution of Prochlorococcus.</title>
        <authorList>
            <person name="Kettler G.C."/>
            <person name="Martiny A.C."/>
            <person name="Huang K."/>
            <person name="Zucker J."/>
            <person name="Coleman M.L."/>
            <person name="Rodrigue S."/>
            <person name="Chen F."/>
            <person name="Lapidus A."/>
            <person name="Ferriera S."/>
            <person name="Johnson J."/>
            <person name="Steglich C."/>
            <person name="Church G.M."/>
            <person name="Richardson P."/>
            <person name="Chisholm S.W."/>
        </authorList>
    </citation>
    <scope>NUCLEOTIDE SEQUENCE [LARGE SCALE GENOMIC DNA]</scope>
    <source>
        <strain>MIT 9215</strain>
    </source>
</reference>
<name>PSBK_PROM2</name>
<gene>
    <name evidence="1" type="primary">psbK</name>
    <name type="ordered locus">P9215_02961</name>
</gene>
<evidence type="ECO:0000255" key="1">
    <source>
        <dbReference type="HAMAP-Rule" id="MF_00441"/>
    </source>
</evidence>
<evidence type="ECO:0000305" key="2"/>
<organism>
    <name type="scientific">Prochlorococcus marinus (strain MIT 9215)</name>
    <dbReference type="NCBI Taxonomy" id="93060"/>
    <lineage>
        <taxon>Bacteria</taxon>
        <taxon>Bacillati</taxon>
        <taxon>Cyanobacteriota</taxon>
        <taxon>Cyanophyceae</taxon>
        <taxon>Synechococcales</taxon>
        <taxon>Prochlorococcaceae</taxon>
        <taxon>Prochlorococcus</taxon>
    </lineage>
</organism>
<dbReference type="EMBL" id="CP000825">
    <property type="protein sequence ID" value="ABV49913.1"/>
    <property type="molecule type" value="Genomic_DNA"/>
</dbReference>
<dbReference type="RefSeq" id="WP_002805418.1">
    <property type="nucleotide sequence ID" value="NC_009840.1"/>
</dbReference>
<dbReference type="SMR" id="A8G2T2"/>
<dbReference type="STRING" id="93060.P9215_02961"/>
<dbReference type="KEGG" id="pmh:P9215_02961"/>
<dbReference type="HOGENOM" id="CLU_174355_0_0_3"/>
<dbReference type="Proteomes" id="UP000002014">
    <property type="component" value="Chromosome"/>
</dbReference>
<dbReference type="GO" id="GO:0009539">
    <property type="term" value="C:photosystem II reaction center"/>
    <property type="evidence" value="ECO:0007669"/>
    <property type="project" value="InterPro"/>
</dbReference>
<dbReference type="GO" id="GO:0031676">
    <property type="term" value="C:plasma membrane-derived thylakoid membrane"/>
    <property type="evidence" value="ECO:0007669"/>
    <property type="project" value="UniProtKB-SubCell"/>
</dbReference>
<dbReference type="GO" id="GO:0015979">
    <property type="term" value="P:photosynthesis"/>
    <property type="evidence" value="ECO:0007669"/>
    <property type="project" value="UniProtKB-UniRule"/>
</dbReference>
<dbReference type="HAMAP" id="MF_00441">
    <property type="entry name" value="PSII_PsbK"/>
    <property type="match status" value="1"/>
</dbReference>
<dbReference type="InterPro" id="IPR003687">
    <property type="entry name" value="PSII_PsbK"/>
</dbReference>
<dbReference type="InterPro" id="IPR037270">
    <property type="entry name" value="PSII_PsbK_sf"/>
</dbReference>
<dbReference type="NCBIfam" id="NF002715">
    <property type="entry name" value="PRK02553.1"/>
    <property type="match status" value="1"/>
</dbReference>
<dbReference type="PANTHER" id="PTHR35325">
    <property type="match status" value="1"/>
</dbReference>
<dbReference type="PANTHER" id="PTHR35325:SF1">
    <property type="entry name" value="PHOTOSYSTEM II REACTION CENTER PROTEIN K"/>
    <property type="match status" value="1"/>
</dbReference>
<dbReference type="Pfam" id="PF02533">
    <property type="entry name" value="PsbK"/>
    <property type="match status" value="1"/>
</dbReference>
<dbReference type="SUPFAM" id="SSF161037">
    <property type="entry name" value="Photosystem II reaction center protein K, PsbK"/>
    <property type="match status" value="1"/>
</dbReference>